<reference key="1">
    <citation type="journal article" date="2001" name="Science">
        <title>The genome of the natural genetic engineer Agrobacterium tumefaciens C58.</title>
        <authorList>
            <person name="Wood D.W."/>
            <person name="Setubal J.C."/>
            <person name="Kaul R."/>
            <person name="Monks D.E."/>
            <person name="Kitajima J.P."/>
            <person name="Okura V.K."/>
            <person name="Zhou Y."/>
            <person name="Chen L."/>
            <person name="Wood G.E."/>
            <person name="Almeida N.F. Jr."/>
            <person name="Woo L."/>
            <person name="Chen Y."/>
            <person name="Paulsen I.T."/>
            <person name="Eisen J.A."/>
            <person name="Karp P.D."/>
            <person name="Bovee D. Sr."/>
            <person name="Chapman P."/>
            <person name="Clendenning J."/>
            <person name="Deatherage G."/>
            <person name="Gillet W."/>
            <person name="Grant C."/>
            <person name="Kutyavin T."/>
            <person name="Levy R."/>
            <person name="Li M.-J."/>
            <person name="McClelland E."/>
            <person name="Palmieri A."/>
            <person name="Raymond C."/>
            <person name="Rouse G."/>
            <person name="Saenphimmachak C."/>
            <person name="Wu Z."/>
            <person name="Romero P."/>
            <person name="Gordon D."/>
            <person name="Zhang S."/>
            <person name="Yoo H."/>
            <person name="Tao Y."/>
            <person name="Biddle P."/>
            <person name="Jung M."/>
            <person name="Krespan W."/>
            <person name="Perry M."/>
            <person name="Gordon-Kamm B."/>
            <person name="Liao L."/>
            <person name="Kim S."/>
            <person name="Hendrick C."/>
            <person name="Zhao Z.-Y."/>
            <person name="Dolan M."/>
            <person name="Chumley F."/>
            <person name="Tingey S.V."/>
            <person name="Tomb J.-F."/>
            <person name="Gordon M.P."/>
            <person name="Olson M.V."/>
            <person name="Nester E.W."/>
        </authorList>
    </citation>
    <scope>NUCLEOTIDE SEQUENCE [LARGE SCALE GENOMIC DNA]</scope>
    <source>
        <strain>C58 / ATCC 33970</strain>
    </source>
</reference>
<reference key="2">
    <citation type="journal article" date="2001" name="Science">
        <title>Genome sequence of the plant pathogen and biotechnology agent Agrobacterium tumefaciens C58.</title>
        <authorList>
            <person name="Goodner B."/>
            <person name="Hinkle G."/>
            <person name="Gattung S."/>
            <person name="Miller N."/>
            <person name="Blanchard M."/>
            <person name="Qurollo B."/>
            <person name="Goldman B.S."/>
            <person name="Cao Y."/>
            <person name="Askenazi M."/>
            <person name="Halling C."/>
            <person name="Mullin L."/>
            <person name="Houmiel K."/>
            <person name="Gordon J."/>
            <person name="Vaudin M."/>
            <person name="Iartchouk O."/>
            <person name="Epp A."/>
            <person name="Liu F."/>
            <person name="Wollam C."/>
            <person name="Allinger M."/>
            <person name="Doughty D."/>
            <person name="Scott C."/>
            <person name="Lappas C."/>
            <person name="Markelz B."/>
            <person name="Flanagan C."/>
            <person name="Crowell C."/>
            <person name="Gurson J."/>
            <person name="Lomo C."/>
            <person name="Sear C."/>
            <person name="Strub G."/>
            <person name="Cielo C."/>
            <person name="Slater S."/>
        </authorList>
    </citation>
    <scope>NUCLEOTIDE SEQUENCE [LARGE SCALE GENOMIC DNA]</scope>
    <source>
        <strain>C58 / ATCC 33970</strain>
    </source>
</reference>
<protein>
    <recommendedName>
        <fullName evidence="1">Large ribosomal subunit protein uL4</fullName>
    </recommendedName>
    <alternativeName>
        <fullName evidence="3">50S ribosomal protein L4</fullName>
    </alternativeName>
</protein>
<name>RL4_AGRFC</name>
<dbReference type="EMBL" id="AE007869">
    <property type="protein sequence ID" value="AAK87707.1"/>
    <property type="molecule type" value="Genomic_DNA"/>
</dbReference>
<dbReference type="PIR" id="AG2815">
    <property type="entry name" value="AG2815"/>
</dbReference>
<dbReference type="PIR" id="B97594">
    <property type="entry name" value="B97594"/>
</dbReference>
<dbReference type="RefSeq" id="NP_354922.1">
    <property type="nucleotide sequence ID" value="NC_003062.2"/>
</dbReference>
<dbReference type="RefSeq" id="WP_010971963.1">
    <property type="nucleotide sequence ID" value="NC_003062.2"/>
</dbReference>
<dbReference type="SMR" id="Q8UE19"/>
<dbReference type="STRING" id="176299.Atu1945"/>
<dbReference type="EnsemblBacteria" id="AAK87707">
    <property type="protein sequence ID" value="AAK87707"/>
    <property type="gene ID" value="Atu1945"/>
</dbReference>
<dbReference type="GeneID" id="1133983"/>
<dbReference type="KEGG" id="atu:Atu1945"/>
<dbReference type="PATRIC" id="fig|176299.10.peg.1957"/>
<dbReference type="eggNOG" id="COG0088">
    <property type="taxonomic scope" value="Bacteria"/>
</dbReference>
<dbReference type="HOGENOM" id="CLU_041575_5_1_5"/>
<dbReference type="OrthoDB" id="9803201at2"/>
<dbReference type="PhylomeDB" id="Q8UE19"/>
<dbReference type="BioCyc" id="AGRO:ATU1945-MONOMER"/>
<dbReference type="Proteomes" id="UP000000813">
    <property type="component" value="Chromosome circular"/>
</dbReference>
<dbReference type="GO" id="GO:1990904">
    <property type="term" value="C:ribonucleoprotein complex"/>
    <property type="evidence" value="ECO:0007669"/>
    <property type="project" value="UniProtKB-KW"/>
</dbReference>
<dbReference type="GO" id="GO:0005840">
    <property type="term" value="C:ribosome"/>
    <property type="evidence" value="ECO:0007669"/>
    <property type="project" value="UniProtKB-KW"/>
</dbReference>
<dbReference type="GO" id="GO:0019843">
    <property type="term" value="F:rRNA binding"/>
    <property type="evidence" value="ECO:0007669"/>
    <property type="project" value="UniProtKB-UniRule"/>
</dbReference>
<dbReference type="GO" id="GO:0003735">
    <property type="term" value="F:structural constituent of ribosome"/>
    <property type="evidence" value="ECO:0007669"/>
    <property type="project" value="InterPro"/>
</dbReference>
<dbReference type="GO" id="GO:0006412">
    <property type="term" value="P:translation"/>
    <property type="evidence" value="ECO:0007669"/>
    <property type="project" value="UniProtKB-UniRule"/>
</dbReference>
<dbReference type="Gene3D" id="3.40.1370.10">
    <property type="match status" value="1"/>
</dbReference>
<dbReference type="HAMAP" id="MF_01328_B">
    <property type="entry name" value="Ribosomal_uL4_B"/>
    <property type="match status" value="1"/>
</dbReference>
<dbReference type="InterPro" id="IPR002136">
    <property type="entry name" value="Ribosomal_uL4"/>
</dbReference>
<dbReference type="InterPro" id="IPR013005">
    <property type="entry name" value="Ribosomal_uL4-like"/>
</dbReference>
<dbReference type="InterPro" id="IPR023574">
    <property type="entry name" value="Ribosomal_uL4_dom_sf"/>
</dbReference>
<dbReference type="NCBIfam" id="TIGR03953">
    <property type="entry name" value="rplD_bact"/>
    <property type="match status" value="1"/>
</dbReference>
<dbReference type="PANTHER" id="PTHR10746">
    <property type="entry name" value="50S RIBOSOMAL PROTEIN L4"/>
    <property type="match status" value="1"/>
</dbReference>
<dbReference type="PANTHER" id="PTHR10746:SF6">
    <property type="entry name" value="LARGE RIBOSOMAL SUBUNIT PROTEIN UL4M"/>
    <property type="match status" value="1"/>
</dbReference>
<dbReference type="Pfam" id="PF00573">
    <property type="entry name" value="Ribosomal_L4"/>
    <property type="match status" value="1"/>
</dbReference>
<dbReference type="SUPFAM" id="SSF52166">
    <property type="entry name" value="Ribosomal protein L4"/>
    <property type="match status" value="1"/>
</dbReference>
<comment type="function">
    <text evidence="1">One of the primary rRNA binding proteins, this protein initially binds near the 5'-end of the 23S rRNA. It is important during the early stages of 50S assembly. It makes multiple contacts with different domains of the 23S rRNA in the assembled 50S subunit and ribosome.</text>
</comment>
<comment type="function">
    <text evidence="1">Forms part of the polypeptide exit tunnel.</text>
</comment>
<comment type="subunit">
    <text evidence="1">Part of the 50S ribosomal subunit.</text>
</comment>
<comment type="similarity">
    <text evidence="1">Belongs to the universal ribosomal protein uL4 family.</text>
</comment>
<accession>Q8UE19</accession>
<feature type="chain" id="PRO_0000129175" description="Large ribosomal subunit protein uL4">
    <location>
        <begin position="1"/>
        <end position="206"/>
    </location>
</feature>
<feature type="region of interest" description="Disordered" evidence="2">
    <location>
        <begin position="42"/>
        <end position="93"/>
    </location>
</feature>
<feature type="compositionally biased region" description="Basic residues" evidence="2">
    <location>
        <begin position="64"/>
        <end position="77"/>
    </location>
</feature>
<keyword id="KW-1185">Reference proteome</keyword>
<keyword id="KW-0687">Ribonucleoprotein</keyword>
<keyword id="KW-0689">Ribosomal protein</keyword>
<keyword id="KW-0694">RNA-binding</keyword>
<keyword id="KW-0699">rRNA-binding</keyword>
<sequence length="206" mass="22435">MELNVKTLEGKDAGKVSLSDEIFGLDPRQDILARMVRWQLAKKQQGTHKTKNRSEVSRTGAKMYKQKGTGRARHHSARAPQFRGGGKAHGPVVRSHAHDLPKKVRALALRHALSAKLKAEELIIVDQLVASEAKTKALLGSFASLGLTNALVIGGAELDGNFKLAAQNIPNVDVLPVQGINVYDILRRGKLVLSKAAVEALEERFK</sequence>
<proteinExistence type="inferred from homology"/>
<organism>
    <name type="scientific">Agrobacterium fabrum (strain C58 / ATCC 33970)</name>
    <name type="common">Agrobacterium tumefaciens (strain C58)</name>
    <dbReference type="NCBI Taxonomy" id="176299"/>
    <lineage>
        <taxon>Bacteria</taxon>
        <taxon>Pseudomonadati</taxon>
        <taxon>Pseudomonadota</taxon>
        <taxon>Alphaproteobacteria</taxon>
        <taxon>Hyphomicrobiales</taxon>
        <taxon>Rhizobiaceae</taxon>
        <taxon>Rhizobium/Agrobacterium group</taxon>
        <taxon>Agrobacterium</taxon>
        <taxon>Agrobacterium tumefaciens complex</taxon>
    </lineage>
</organism>
<gene>
    <name evidence="1" type="primary">rplD</name>
    <name type="ordered locus">Atu1945</name>
    <name type="ORF">AGR_C_3553</name>
</gene>
<evidence type="ECO:0000255" key="1">
    <source>
        <dbReference type="HAMAP-Rule" id="MF_01328"/>
    </source>
</evidence>
<evidence type="ECO:0000256" key="2">
    <source>
        <dbReference type="SAM" id="MobiDB-lite"/>
    </source>
</evidence>
<evidence type="ECO:0000305" key="3"/>